<protein>
    <recommendedName>
        <fullName evidence="13 14">ALK and LTK ligand 1</fullName>
    </recommendedName>
    <alternativeName>
        <fullName evidence="12">Augmentor beta</fullName>
        <shortName evidence="12">AUG-beta</shortName>
    </alternativeName>
</protein>
<proteinExistence type="evidence at protein level"/>
<accession>Q6UXT8</accession>
<accession>B7ZMG9</accession>
<keyword id="KW-0002">3D-structure</keyword>
<keyword id="KW-0025">Alternative splicing</keyword>
<keyword id="KW-1003">Cell membrane</keyword>
<keyword id="KW-0202">Cytokine</keyword>
<keyword id="KW-1015">Disulfide bond</keyword>
<keyword id="KW-0472">Membrane</keyword>
<keyword id="KW-1267">Proteomics identification</keyword>
<keyword id="KW-1185">Reference proteome</keyword>
<keyword id="KW-0964">Secreted</keyword>
<keyword id="KW-0732">Signal</keyword>
<name>ALKL1_HUMAN</name>
<organism>
    <name type="scientific">Homo sapiens</name>
    <name type="common">Human</name>
    <dbReference type="NCBI Taxonomy" id="9606"/>
    <lineage>
        <taxon>Eukaryota</taxon>
        <taxon>Metazoa</taxon>
        <taxon>Chordata</taxon>
        <taxon>Craniata</taxon>
        <taxon>Vertebrata</taxon>
        <taxon>Euteleostomi</taxon>
        <taxon>Mammalia</taxon>
        <taxon>Eutheria</taxon>
        <taxon>Euarchontoglires</taxon>
        <taxon>Primates</taxon>
        <taxon>Haplorrhini</taxon>
        <taxon>Catarrhini</taxon>
        <taxon>Hominidae</taxon>
        <taxon>Homo</taxon>
    </lineage>
</organism>
<feature type="signal peptide" evidence="2">
    <location>
        <begin position="1"/>
        <end position="27"/>
    </location>
</feature>
<feature type="chain" id="PRO_0000317192" description="ALK and LTK ligand 1">
    <location>
        <begin position="28"/>
        <end position="129"/>
    </location>
</feature>
<feature type="region of interest" description="Disordered" evidence="3">
    <location>
        <begin position="24"/>
        <end position="63"/>
    </location>
</feature>
<feature type="compositionally biased region" description="Basic residues" evidence="3">
    <location>
        <begin position="25"/>
        <end position="35"/>
    </location>
</feature>
<feature type="disulfide bond" evidence="7 8 18 19">
    <location>
        <begin position="90"/>
        <end position="126"/>
    </location>
</feature>
<feature type="disulfide bond" evidence="7 8 18 19">
    <location>
        <begin position="104"/>
        <end position="113"/>
    </location>
</feature>
<feature type="splice variant" id="VSP_055085" description="In isoform 2." evidence="10">
    <original>YKRCARLLTRLAVSPLCSQT</original>
    <variation>IS</variation>
    <location>
        <begin position="110"/>
        <end position="129"/>
    </location>
</feature>
<feature type="mutagenesis site" description="Slightly reduced affinity for receptor tyrosine kinase LTK." evidence="7">
    <original>F</original>
    <variation>E</variation>
    <location>
        <position position="76"/>
    </location>
</feature>
<feature type="mutagenesis site" description="Reduced affinity for receptor tyrosine kinase LTK." evidence="7">
    <original>R</original>
    <variation>E</variation>
    <location>
        <position position="102"/>
    </location>
</feature>
<feature type="mutagenesis site" description="Reduced affinity for receptor tyrosine kinase LTK." evidence="7">
    <original>R</original>
    <variation>E</variation>
    <location>
        <position position="115"/>
    </location>
</feature>
<feature type="strand" evidence="20">
    <location>
        <begin position="64"/>
        <end position="67"/>
    </location>
</feature>
<feature type="helix" evidence="21">
    <location>
        <begin position="72"/>
        <end position="81"/>
    </location>
</feature>
<feature type="helix" evidence="21">
    <location>
        <begin position="88"/>
        <end position="90"/>
    </location>
</feature>
<feature type="helix" evidence="21">
    <location>
        <begin position="91"/>
        <end position="99"/>
    </location>
</feature>
<feature type="strand" evidence="20">
    <location>
        <begin position="100"/>
        <end position="102"/>
    </location>
</feature>
<feature type="helix" evidence="21">
    <location>
        <begin position="103"/>
        <end position="105"/>
    </location>
</feature>
<feature type="helix" evidence="21">
    <location>
        <begin position="107"/>
        <end position="109"/>
    </location>
</feature>
<feature type="helix" evidence="21">
    <location>
        <begin position="110"/>
        <end position="121"/>
    </location>
</feature>
<feature type="helix" evidence="21">
    <location>
        <begin position="124"/>
        <end position="127"/>
    </location>
</feature>
<gene>
    <name evidence="13 14 17" type="primary">ALKAL1</name>
    <name evidence="11" type="synonym">FAM150A</name>
    <name evidence="9" type="ORF">UNQ9433/PRO34745</name>
</gene>
<evidence type="ECO:0000250" key="1">
    <source>
        <dbReference type="UniProtKB" id="Q6UX46"/>
    </source>
</evidence>
<evidence type="ECO:0000255" key="2"/>
<evidence type="ECO:0000256" key="3">
    <source>
        <dbReference type="SAM" id="MobiDB-lite"/>
    </source>
</evidence>
<evidence type="ECO:0000269" key="4">
    <source>
    </source>
</evidence>
<evidence type="ECO:0000269" key="5">
    <source>
    </source>
</evidence>
<evidence type="ECO:0000269" key="6">
    <source>
    </source>
</evidence>
<evidence type="ECO:0000269" key="7">
    <source>
    </source>
</evidence>
<evidence type="ECO:0000269" key="8">
    <source>
    </source>
</evidence>
<evidence type="ECO:0000303" key="9">
    <source>
    </source>
</evidence>
<evidence type="ECO:0000303" key="10">
    <source>
    </source>
</evidence>
<evidence type="ECO:0000303" key="11">
    <source>
    </source>
</evidence>
<evidence type="ECO:0000303" key="12">
    <source>
    </source>
</evidence>
<evidence type="ECO:0000303" key="13">
    <source>
    </source>
</evidence>
<evidence type="ECO:0000303" key="14">
    <source>
    </source>
</evidence>
<evidence type="ECO:0000305" key="15"/>
<evidence type="ECO:0000305" key="16">
    <source>
    </source>
</evidence>
<evidence type="ECO:0000312" key="17">
    <source>
        <dbReference type="HGNC" id="HGNC:33775"/>
    </source>
</evidence>
<evidence type="ECO:0007744" key="18">
    <source>
        <dbReference type="PDB" id="7MZZ"/>
    </source>
</evidence>
<evidence type="ECO:0007744" key="19">
    <source>
        <dbReference type="PDB" id="7NX0"/>
    </source>
</evidence>
<evidence type="ECO:0007829" key="20">
    <source>
        <dbReference type="PDB" id="7MZZ"/>
    </source>
</evidence>
<evidence type="ECO:0007829" key="21">
    <source>
        <dbReference type="PDB" id="7NX0"/>
    </source>
</evidence>
<comment type="function">
    <text evidence="4 5 6 7 8">Cytokine that acts as a physiological ligand for receptor tyrosine kinase LTK, leading to its activation (PubMed:25331893, PubMed:26418745, PubMed:26630010, PubMed:34646012, PubMed:34819673). Monomeric ALKAL1 binds to LTK, leading to LTK homodimerization and activation (PubMed:34646012, PubMed:34819673). In contrast to ALKAL2, does not act as a potent physiological ligand for ALK (PubMed:26418745, PubMed:34646012).</text>
</comment>
<comment type="interaction">
    <interactant intactId="EBI-11691642">
        <id>Q6UXT8</id>
    </interactant>
    <interactant intactId="EBI-357361">
        <id>Q9UM73</id>
        <label>ALK</label>
    </interactant>
    <organismsDiffer>false</organismsDiffer>
    <experiments>7</experiments>
</comment>
<comment type="interaction">
    <interactant intactId="EBI-11691642">
        <id>Q6UXT8</id>
    </interactant>
    <interactant intactId="EBI-6596163">
        <id>P29376</id>
        <label>LTK</label>
    </interactant>
    <organismsDiffer>false</organismsDiffer>
    <experiments>3</experiments>
</comment>
<comment type="subcellular location">
    <subcellularLocation>
        <location evidence="1">Secreted</location>
    </subcellularLocation>
    <subcellularLocation>
        <location evidence="16">Cell membrane</location>
    </subcellularLocation>
    <text evidence="1">Following interaction with receptor tyrosine kinase LTK, associates with the cell membrane, membrane-binding is required to activate LTK.</text>
</comment>
<comment type="alternative products">
    <event type="alternative splicing"/>
    <isoform>
        <id>Q6UXT8-1</id>
        <name>1</name>
        <sequence type="displayed"/>
    </isoform>
    <isoform>
        <id>Q6UXT8-2</id>
        <name>2</name>
        <sequence type="described" ref="VSP_055085"/>
    </isoform>
</comment>
<comment type="tissue specificity">
    <text evidence="4">Widely expressed with highest levels in thyroid and moderate levels in stomach, trachea, small intestine, prostate and brain.</text>
</comment>
<comment type="similarity">
    <text evidence="15">Belongs to the ALKAL family.</text>
</comment>
<reference key="1">
    <citation type="journal article" date="2003" name="Genome Res.">
        <title>The secreted protein discovery initiative (SPDI), a large-scale effort to identify novel human secreted and transmembrane proteins: a bioinformatics assessment.</title>
        <authorList>
            <person name="Clark H.F."/>
            <person name="Gurney A.L."/>
            <person name="Abaya E."/>
            <person name="Baker K."/>
            <person name="Baldwin D.T."/>
            <person name="Brush J."/>
            <person name="Chen J."/>
            <person name="Chow B."/>
            <person name="Chui C."/>
            <person name="Crowley C."/>
            <person name="Currell B."/>
            <person name="Deuel B."/>
            <person name="Dowd P."/>
            <person name="Eaton D."/>
            <person name="Foster J.S."/>
            <person name="Grimaldi C."/>
            <person name="Gu Q."/>
            <person name="Hass P.E."/>
            <person name="Heldens S."/>
            <person name="Huang A."/>
            <person name="Kim H.S."/>
            <person name="Klimowski L."/>
            <person name="Jin Y."/>
            <person name="Johnson S."/>
            <person name="Lee J."/>
            <person name="Lewis L."/>
            <person name="Liao D."/>
            <person name="Mark M.R."/>
            <person name="Robbie E."/>
            <person name="Sanchez C."/>
            <person name="Schoenfeld J."/>
            <person name="Seshagiri S."/>
            <person name="Simmons L."/>
            <person name="Singh J."/>
            <person name="Smith V."/>
            <person name="Stinson J."/>
            <person name="Vagts A."/>
            <person name="Vandlen R.L."/>
            <person name="Watanabe C."/>
            <person name="Wieand D."/>
            <person name="Woods K."/>
            <person name="Xie M.-H."/>
            <person name="Yansura D.G."/>
            <person name="Yi S."/>
            <person name="Yu G."/>
            <person name="Yuan J."/>
            <person name="Zhang M."/>
            <person name="Zhang Z."/>
            <person name="Goddard A.D."/>
            <person name="Wood W.I."/>
            <person name="Godowski P.J."/>
            <person name="Gray A.M."/>
        </authorList>
    </citation>
    <scope>NUCLEOTIDE SEQUENCE [LARGE SCALE MRNA] (ISOFORM 1)</scope>
</reference>
<reference key="2">
    <citation type="journal article" date="2006" name="Nature">
        <title>DNA sequence and analysis of human chromosome 8.</title>
        <authorList>
            <person name="Nusbaum C."/>
            <person name="Mikkelsen T.S."/>
            <person name="Zody M.C."/>
            <person name="Asakawa S."/>
            <person name="Taudien S."/>
            <person name="Garber M."/>
            <person name="Kodira C.D."/>
            <person name="Schueler M.G."/>
            <person name="Shimizu A."/>
            <person name="Whittaker C.A."/>
            <person name="Chang J.L."/>
            <person name="Cuomo C.A."/>
            <person name="Dewar K."/>
            <person name="FitzGerald M.G."/>
            <person name="Yang X."/>
            <person name="Allen N.R."/>
            <person name="Anderson S."/>
            <person name="Asakawa T."/>
            <person name="Blechschmidt K."/>
            <person name="Bloom T."/>
            <person name="Borowsky M.L."/>
            <person name="Butler J."/>
            <person name="Cook A."/>
            <person name="Corum B."/>
            <person name="DeArellano K."/>
            <person name="DeCaprio D."/>
            <person name="Dooley K.T."/>
            <person name="Dorris L. III"/>
            <person name="Engels R."/>
            <person name="Gloeckner G."/>
            <person name="Hafez N."/>
            <person name="Hagopian D.S."/>
            <person name="Hall J.L."/>
            <person name="Ishikawa S.K."/>
            <person name="Jaffe D.B."/>
            <person name="Kamat A."/>
            <person name="Kudoh J."/>
            <person name="Lehmann R."/>
            <person name="Lokitsang T."/>
            <person name="Macdonald P."/>
            <person name="Major J.E."/>
            <person name="Matthews C.D."/>
            <person name="Mauceli E."/>
            <person name="Menzel U."/>
            <person name="Mihalev A.H."/>
            <person name="Minoshima S."/>
            <person name="Murayama Y."/>
            <person name="Naylor J.W."/>
            <person name="Nicol R."/>
            <person name="Nguyen C."/>
            <person name="O'Leary S.B."/>
            <person name="O'Neill K."/>
            <person name="Parker S.C.J."/>
            <person name="Polley A."/>
            <person name="Raymond C.K."/>
            <person name="Reichwald K."/>
            <person name="Rodriguez J."/>
            <person name="Sasaki T."/>
            <person name="Schilhabel M."/>
            <person name="Siddiqui R."/>
            <person name="Smith C.L."/>
            <person name="Sneddon T.P."/>
            <person name="Talamas J.A."/>
            <person name="Tenzin P."/>
            <person name="Topham K."/>
            <person name="Venkataraman V."/>
            <person name="Wen G."/>
            <person name="Yamazaki S."/>
            <person name="Young S.K."/>
            <person name="Zeng Q."/>
            <person name="Zimmer A.R."/>
            <person name="Rosenthal A."/>
            <person name="Birren B.W."/>
            <person name="Platzer M."/>
            <person name="Shimizu N."/>
            <person name="Lander E.S."/>
        </authorList>
    </citation>
    <scope>NUCLEOTIDE SEQUENCE [LARGE SCALE GENOMIC DNA]</scope>
</reference>
<reference key="3">
    <citation type="journal article" date="2004" name="Genome Res.">
        <title>The status, quality, and expansion of the NIH full-length cDNA project: the Mammalian Gene Collection (MGC).</title>
        <authorList>
            <consortium name="The MGC Project Team"/>
        </authorList>
    </citation>
    <scope>NUCLEOTIDE SEQUENCE [LARGE SCALE MRNA] (ISOFORMS 1 AND 2)</scope>
</reference>
<reference key="4">
    <citation type="journal article" date="2014" name="Proc. Natl. Acad. Sci. U.S.A.">
        <title>Deorphanization of the human leukocyte tyrosine kinase (LTK) receptor by a signaling screen of the extracellular proteome.</title>
        <authorList>
            <person name="Zhang H."/>
            <person name="Pao L.I."/>
            <person name="Zhou A."/>
            <person name="Brace A.D."/>
            <person name="Halenbeck R."/>
            <person name="Hsu A.W."/>
            <person name="Bray T.L."/>
            <person name="Hestir K."/>
            <person name="Bosch E."/>
            <person name="Lee E."/>
            <person name="Wang G."/>
            <person name="Liu H."/>
            <person name="Wong B.R."/>
            <person name="Kavanaugh W.M."/>
            <person name="Williams L.T."/>
        </authorList>
    </citation>
    <scope>FUNCTION</scope>
    <scope>TISSUE SPECIFICITY</scope>
</reference>
<reference key="5">
    <citation type="journal article" date="2015" name="Elife">
        <title>FAM150A and FAM150B are activating ligands for anaplastic lymphoma kinase.</title>
        <authorList>
            <person name="Guan J."/>
            <person name="Umapathy G."/>
            <person name="Yamazaki Y."/>
            <person name="Wolfstetter G."/>
            <person name="Mendoza P."/>
            <person name="Pfeifer K."/>
            <person name="Mohammed A."/>
            <person name="Hugosson F."/>
            <person name="Zhang H."/>
            <person name="Hsu A.W."/>
            <person name="Halenbeck R."/>
            <person name="Hallberg B."/>
            <person name="Palmer R.H."/>
        </authorList>
    </citation>
    <scope>FUNCTION</scope>
</reference>
<reference key="6">
    <citation type="journal article" date="2015" name="Proc. Natl. Acad. Sci. U.S.A.">
        <title>Augmentor alpha and beta (FAM150) are ligands of the receptor tyrosine kinases ALK and LTK: Hierarchy and specificity of ligand-receptor interactions.</title>
        <authorList>
            <person name="Reshetnyak A.V."/>
            <person name="Murray P.B."/>
            <person name="Shi X."/>
            <person name="Mo E.S."/>
            <person name="Mohanty J."/>
            <person name="Tome F."/>
            <person name="Bai H."/>
            <person name="Gunel M."/>
            <person name="Lax I."/>
            <person name="Schlessinger J."/>
        </authorList>
    </citation>
    <scope>FUNCTION</scope>
</reference>
<reference key="7">
    <citation type="journal article" date="2021" name="Nature">
        <title>Structural basis of cytokine-mediated activation of ALK family receptors.</title>
        <authorList>
            <person name="De Munck S."/>
            <person name="Provost M."/>
            <person name="Kurikawa M."/>
            <person name="Omori I."/>
            <person name="Mukohyama J."/>
            <person name="Felix J."/>
            <person name="Bloch Y."/>
            <person name="Abdel-Wahab O."/>
            <person name="Bazan J.F."/>
            <person name="Yoshimi A."/>
            <person name="Savvides S.N."/>
        </authorList>
    </citation>
    <scope>STRUCTURE BY ELECTRON MICROSCOPY (1.95 ANGSTROMS) OF 57-129 IN COMPLEX WITH LTK</scope>
    <scope>FUNCTION</scope>
    <scope>DISULFIDE BONDS</scope>
    <scope>MUTAGENESIS OF PHE-76; ARG-102 AND ARG-115</scope>
</reference>
<reference key="8">
    <citation type="journal article" date="2021" name="Nature">
        <title>Mechanism for the activation of the anaplastic lymphoma kinase receptor.</title>
        <authorList>
            <person name="Reshetnyak A.V."/>
            <person name="Rossi P."/>
            <person name="Myasnikov A.G."/>
            <person name="Sowaileh M."/>
            <person name="Mohanty J."/>
            <person name="Nourse A."/>
            <person name="Miller D.J."/>
            <person name="Lax I."/>
            <person name="Schlessinger J."/>
            <person name="Kalodimos C.G."/>
        </authorList>
    </citation>
    <scope>STRUCTURE BY NMR OF 60-129</scope>
    <scope>FUNCTION</scope>
    <scope>DISULFIDE BONDS</scope>
</reference>
<dbReference type="EMBL" id="AY358213">
    <property type="protein sequence ID" value="AAQ88580.1"/>
    <property type="molecule type" value="mRNA"/>
</dbReference>
<dbReference type="EMBL" id="AC013650">
    <property type="status" value="NOT_ANNOTATED_CDS"/>
    <property type="molecule type" value="Genomic_DNA"/>
</dbReference>
<dbReference type="EMBL" id="BC130641">
    <property type="protein sequence ID" value="AAI30642.1"/>
    <property type="molecule type" value="mRNA"/>
</dbReference>
<dbReference type="EMBL" id="BC130643">
    <property type="protein sequence ID" value="AAI30644.1"/>
    <property type="molecule type" value="mRNA"/>
</dbReference>
<dbReference type="EMBL" id="BC144534">
    <property type="protein sequence ID" value="AAI44535.1"/>
    <property type="molecule type" value="mRNA"/>
</dbReference>
<dbReference type="CCDS" id="CCDS6150.1">
    <molecule id="Q6UXT8-1"/>
</dbReference>
<dbReference type="RefSeq" id="NP_997296.1">
    <molecule id="Q6UXT8-1"/>
    <property type="nucleotide sequence ID" value="NM_207413.4"/>
</dbReference>
<dbReference type="PDB" id="7MK7">
    <property type="method" value="X-ray"/>
    <property type="resolution" value="2.43 A"/>
    <property type="chains" value="A/B=60-129"/>
</dbReference>
<dbReference type="PDB" id="7MZZ">
    <property type="method" value="NMR"/>
    <property type="chains" value="A=60-129"/>
</dbReference>
<dbReference type="PDB" id="7NX0">
    <property type="method" value="X-ray"/>
    <property type="resolution" value="1.95 A"/>
    <property type="chains" value="A=57-129"/>
</dbReference>
<dbReference type="PDBsum" id="7MK7"/>
<dbReference type="PDBsum" id="7MZZ"/>
<dbReference type="PDBsum" id="7NX0"/>
<dbReference type="SMR" id="Q6UXT8"/>
<dbReference type="BioGRID" id="133213">
    <property type="interactions" value="1"/>
</dbReference>
<dbReference type="FunCoup" id="Q6UXT8">
    <property type="interactions" value="199"/>
</dbReference>
<dbReference type="IntAct" id="Q6UXT8">
    <property type="interactions" value="2"/>
</dbReference>
<dbReference type="STRING" id="9606.ENSP00000351345"/>
<dbReference type="GlyGen" id="Q6UXT8">
    <property type="glycosylation" value="2 sites, 1 O-linked glycan (2 sites)"/>
</dbReference>
<dbReference type="iPTMnet" id="Q6UXT8"/>
<dbReference type="PhosphoSitePlus" id="Q6UXT8"/>
<dbReference type="BioMuta" id="ALKAL1"/>
<dbReference type="jPOST" id="Q6UXT8"/>
<dbReference type="MassIVE" id="Q6UXT8"/>
<dbReference type="PaxDb" id="9606-ENSP00000351345"/>
<dbReference type="PeptideAtlas" id="Q6UXT8"/>
<dbReference type="Antibodypedia" id="24431">
    <property type="antibodies" value="21 antibodies from 7 providers"/>
</dbReference>
<dbReference type="DNASU" id="389658"/>
<dbReference type="Ensembl" id="ENST00000358543.9">
    <molecule id="Q6UXT8-1"/>
    <property type="protein sequence ID" value="ENSP00000351345.4"/>
    <property type="gene ID" value="ENSG00000196711.9"/>
</dbReference>
<dbReference type="Ensembl" id="ENST00000523939.1">
    <molecule id="Q6UXT8-2"/>
    <property type="protein sequence ID" value="ENSP00000430953.1"/>
    <property type="gene ID" value="ENSG00000196711.9"/>
</dbReference>
<dbReference type="GeneID" id="389658"/>
<dbReference type="KEGG" id="hsa:389658"/>
<dbReference type="MANE-Select" id="ENST00000358543.9">
    <property type="protein sequence ID" value="ENSP00000351345.4"/>
    <property type="RefSeq nucleotide sequence ID" value="NM_207413.4"/>
    <property type="RefSeq protein sequence ID" value="NP_997296.1"/>
</dbReference>
<dbReference type="UCSC" id="uc003xrd.4">
    <molecule id="Q6UXT8-1"/>
    <property type="organism name" value="human"/>
</dbReference>
<dbReference type="AGR" id="HGNC:33775"/>
<dbReference type="CTD" id="389658"/>
<dbReference type="DisGeNET" id="389658"/>
<dbReference type="GeneCards" id="ALKAL1"/>
<dbReference type="HGNC" id="HGNC:33775">
    <property type="gene designation" value="ALKAL1"/>
</dbReference>
<dbReference type="HPA" id="ENSG00000196711">
    <property type="expression patterns" value="Tissue enhanced (gallbladder, thyroid gland, urinary bladder)"/>
</dbReference>
<dbReference type="MIM" id="619670">
    <property type="type" value="gene"/>
</dbReference>
<dbReference type="neXtProt" id="NX_Q6UXT8"/>
<dbReference type="OpenTargets" id="ENSG00000196711"/>
<dbReference type="PharmGKB" id="PA162386433"/>
<dbReference type="VEuPathDB" id="HostDB:ENSG00000196711"/>
<dbReference type="eggNOG" id="ENOG502RZG1">
    <property type="taxonomic scope" value="Eukaryota"/>
</dbReference>
<dbReference type="GeneTree" id="ENSGT00940000159969"/>
<dbReference type="HOGENOM" id="CLU_126080_0_0_1"/>
<dbReference type="InParanoid" id="Q6UXT8"/>
<dbReference type="OMA" id="CYKRCAR"/>
<dbReference type="OrthoDB" id="9807651at2759"/>
<dbReference type="PAN-GO" id="Q6UXT8">
    <property type="GO annotations" value="4 GO annotations based on evolutionary models"/>
</dbReference>
<dbReference type="PhylomeDB" id="Q6UXT8"/>
<dbReference type="TreeFam" id="TF333390"/>
<dbReference type="PathwayCommons" id="Q6UXT8"/>
<dbReference type="Reactome" id="R-HSA-201556">
    <property type="pathway name" value="Signaling by ALK"/>
</dbReference>
<dbReference type="Reactome" id="R-HSA-9842663">
    <property type="pathway name" value="Signaling by LTK"/>
</dbReference>
<dbReference type="SignaLink" id="Q6UXT8"/>
<dbReference type="BioGRID-ORCS" id="389658">
    <property type="hits" value="15 hits in 1134 CRISPR screens"/>
</dbReference>
<dbReference type="GenomeRNAi" id="389658"/>
<dbReference type="Pharos" id="Q6UXT8">
    <property type="development level" value="Tbio"/>
</dbReference>
<dbReference type="PRO" id="PR:Q6UXT8"/>
<dbReference type="Proteomes" id="UP000005640">
    <property type="component" value="Chromosome 8"/>
</dbReference>
<dbReference type="RNAct" id="Q6UXT8">
    <property type="molecule type" value="protein"/>
</dbReference>
<dbReference type="Bgee" id="ENSG00000196711">
    <property type="expression patterns" value="Expressed in male germ line stem cell (sensu Vertebrata) in testis and 55 other cell types or tissues"/>
</dbReference>
<dbReference type="GO" id="GO:0005576">
    <property type="term" value="C:extracellular region"/>
    <property type="evidence" value="ECO:0000304"/>
    <property type="project" value="Reactome"/>
</dbReference>
<dbReference type="GO" id="GO:0005615">
    <property type="term" value="C:extracellular space"/>
    <property type="evidence" value="ECO:0000314"/>
    <property type="project" value="UniProt"/>
</dbReference>
<dbReference type="GO" id="GO:0005886">
    <property type="term" value="C:plasma membrane"/>
    <property type="evidence" value="ECO:0007669"/>
    <property type="project" value="UniProtKB-SubCell"/>
</dbReference>
<dbReference type="GO" id="GO:0005125">
    <property type="term" value="F:cytokine activity"/>
    <property type="evidence" value="ECO:0000314"/>
    <property type="project" value="UniProtKB"/>
</dbReference>
<dbReference type="GO" id="GO:0030298">
    <property type="term" value="F:receptor signaling protein tyrosine kinase activator activity"/>
    <property type="evidence" value="ECO:0000314"/>
    <property type="project" value="UniProtKB"/>
</dbReference>
<dbReference type="GO" id="GO:0030971">
    <property type="term" value="F:receptor tyrosine kinase binding"/>
    <property type="evidence" value="ECO:0000314"/>
    <property type="project" value="UniProtKB"/>
</dbReference>
<dbReference type="GO" id="GO:0030297">
    <property type="term" value="F:transmembrane receptor protein tyrosine kinase activator activity"/>
    <property type="evidence" value="ECO:0000314"/>
    <property type="project" value="UniProt"/>
</dbReference>
<dbReference type="GO" id="GO:0007169">
    <property type="term" value="P:cell surface receptor protein tyrosine kinase signaling pathway"/>
    <property type="evidence" value="ECO:0000314"/>
    <property type="project" value="UniProt"/>
</dbReference>
<dbReference type="GO" id="GO:0070374">
    <property type="term" value="P:positive regulation of ERK1 and ERK2 cascade"/>
    <property type="evidence" value="ECO:0000314"/>
    <property type="project" value="UniProtKB"/>
</dbReference>
<dbReference type="GO" id="GO:0070378">
    <property type="term" value="P:positive regulation of ERK5 cascade"/>
    <property type="evidence" value="ECO:0000314"/>
    <property type="project" value="UniProtKB"/>
</dbReference>
<dbReference type="GO" id="GO:0010976">
    <property type="term" value="P:positive regulation of neuron projection development"/>
    <property type="evidence" value="ECO:0000314"/>
    <property type="project" value="UniProtKB"/>
</dbReference>
<dbReference type="InterPro" id="IPR029364">
    <property type="entry name" value="ALKL1/2"/>
</dbReference>
<dbReference type="PANTHER" id="PTHR28676:SF1">
    <property type="entry name" value="ALK AND LTK LIGAND 1"/>
    <property type="match status" value="1"/>
</dbReference>
<dbReference type="PANTHER" id="PTHR28676">
    <property type="entry name" value="ALK AND LTK LIGAND 2-RELATED"/>
    <property type="match status" value="1"/>
</dbReference>
<dbReference type="Pfam" id="PF15129">
    <property type="entry name" value="ALKL1_2"/>
    <property type="match status" value="1"/>
</dbReference>
<sequence length="129" mass="14269">MRPLKPGAPLPALFLLALALSPHGAHGRPRGRRGARVTDKEPKPLLFLPAAGAGRTPSGSRSAEIFPRDSNLKDKFIKHFTGPVTFSPECSKHFHRLYYNTRECSTPAYYKRCARLLTRLAVSPLCSQT</sequence>